<feature type="chain" id="PRO_0000437458" description="NKAP-like protein">
    <location>
        <begin position="1"/>
        <end position="395"/>
    </location>
</feature>
<feature type="region of interest" description="Disordered" evidence="2">
    <location>
        <begin position="1"/>
        <end position="77"/>
    </location>
</feature>
<feature type="region of interest" description="Disordered" evidence="2">
    <location>
        <begin position="91"/>
        <end position="247"/>
    </location>
</feature>
<feature type="compositionally biased region" description="Polar residues" evidence="2">
    <location>
        <begin position="25"/>
        <end position="35"/>
    </location>
</feature>
<feature type="compositionally biased region" description="Basic and acidic residues" evidence="2">
    <location>
        <begin position="109"/>
        <end position="130"/>
    </location>
</feature>
<feature type="compositionally biased region" description="Basic and acidic residues" evidence="2">
    <location>
        <begin position="150"/>
        <end position="161"/>
    </location>
</feature>
<feature type="compositionally biased region" description="Basic residues" evidence="2">
    <location>
        <begin position="177"/>
        <end position="197"/>
    </location>
</feature>
<feature type="compositionally biased region" description="Basic residues" evidence="2">
    <location>
        <begin position="214"/>
        <end position="238"/>
    </location>
</feature>
<feature type="modified residue" description="Phosphoserine" evidence="10">
    <location>
        <position position="23"/>
    </location>
</feature>
<feature type="modified residue" description="Phosphoserine" evidence="10">
    <location>
        <position position="25"/>
    </location>
</feature>
<feature type="modified residue" description="Phosphoserine" evidence="10">
    <location>
        <position position="149"/>
    </location>
</feature>
<feature type="sequence conflict" description="In Ref. 4; AAH99550/AAH89537/AAH61080." evidence="4" ref="4">
    <original>G</original>
    <variation>R</variation>
    <location>
        <position position="47"/>
    </location>
</feature>
<feature type="sequence conflict" description="In Ref. 4; AAH89537." evidence="4" ref="4">
    <original>T</original>
    <variation>K</variation>
    <location>
        <position position="182"/>
    </location>
</feature>
<feature type="sequence conflict" description="In Ref. 4; AAH89537." evidence="4" ref="4">
    <original>R</original>
    <variation>K</variation>
    <location>
        <position position="186"/>
    </location>
</feature>
<feature type="sequence conflict" description="In Ref. 4; AAH89537." evidence="4" ref="4">
    <original>P</original>
    <variation>K</variation>
    <location>
        <position position="190"/>
    </location>
</feature>
<feature type="sequence conflict" description="In Ref. 1; BAB29564." evidence="4" ref="1">
    <original>KP</original>
    <variation>NT</variation>
    <location>
        <begin position="285"/>
        <end position="286"/>
    </location>
</feature>
<sequence>MSPVSRSRPNEDTLGSQKRRRFSESPPSALQTSRSPRGGGFGSLLSGPEGLQPPRGAQGVRPLHPISRPRSGERPLPLGIRTLACSSSPICGGYRYHHNYAGDPSWAEDQEKEKEESYRQRRLKERERIGELGAPEVWGLSPKIPEPDSDEHTPAEDEVKNQKSSSSDFTNEEKRTKTSHSTKKKRKKKPSKRKHKKYYDSSSDCHSSSDSDKKKVKTKKKEKKKKHRAKQLKKKRTKKEYNDISCKASERDLPEDAWMEQSMSAESMDLIGPEAPVIHTSQDEKPLNYGHALLPGEGAAMAEYVKAGKRIPRRGEIGLTSEEIASFECSGYVMSGSRHRRMEAVRLRKENQIYSADEKRALASFNQEERRKRENKILASFREMVYRKTKGKDDK</sequence>
<proteinExistence type="evidence at protein level"/>
<keyword id="KW-0221">Differentiation</keyword>
<keyword id="KW-0539">Nucleus</keyword>
<keyword id="KW-0597">Phosphoprotein</keyword>
<keyword id="KW-1185">Reference proteome</keyword>
<keyword id="KW-0744">Spermatogenesis</keyword>
<keyword id="KW-0804">Transcription</keyword>
<keyword id="KW-0805">Transcription regulation</keyword>
<comment type="function">
    <text evidence="3">Transcriptional repressor of Notch-mediated signaling. Required for spermatogenesis.</text>
</comment>
<comment type="subunit">
    <text evidence="3">Interacts with RBPJ, CIR1 and HDAC3.</text>
</comment>
<comment type="subcellular location">
    <subcellularLocation>
        <location evidence="3">Nucleus</location>
    </subcellularLocation>
</comment>
<comment type="tissue specificity">
    <text evidence="3">Specific to testis (at protein level). Detected in differenting spermatogonia and early spermatocytes (at protein level).</text>
</comment>
<comment type="developmental stage">
    <text evidence="3">Strongly expressed in testis from 3 weeks onwards.</text>
</comment>
<comment type="disruption phenotype">
    <text evidence="3">Viable. Males are infertile with reduced testis size, while female fertility is not affected. In the testis, germ cell development arrests at the pachytene spermatocyte stage leading to complete absence of mature spermatozoa.</text>
</comment>
<comment type="similarity">
    <text evidence="4">Belongs to the NKAP family.</text>
</comment>
<comment type="sequence caution" evidence="4">
    <conflict type="miscellaneous discrepancy">
        <sequence resource="EMBL-CDS" id="AAH61080"/>
    </conflict>
    <text>Contaminating sequence. Potential poly-A sequence.</text>
</comment>
<evidence type="ECO:0000250" key="1">
    <source>
        <dbReference type="UniProtKB" id="Q5M9Q1"/>
    </source>
</evidence>
<evidence type="ECO:0000256" key="2">
    <source>
        <dbReference type="SAM" id="MobiDB-lite"/>
    </source>
</evidence>
<evidence type="ECO:0000269" key="3">
    <source>
    </source>
</evidence>
<evidence type="ECO:0000305" key="4"/>
<evidence type="ECO:0000312" key="5">
    <source>
        <dbReference type="EMBL" id="AAH99550.1"/>
    </source>
</evidence>
<evidence type="ECO:0000312" key="6">
    <source>
        <dbReference type="EMBL" id="BAE35781.1"/>
    </source>
</evidence>
<evidence type="ECO:0000312" key="7">
    <source>
        <dbReference type="EMBL" id="EDL32651.1"/>
    </source>
</evidence>
<evidence type="ECO:0000312" key="8">
    <source>
        <dbReference type="MGI" id="MGI:1913957"/>
    </source>
</evidence>
<evidence type="ECO:0000312" key="9">
    <source>
        <dbReference type="Proteomes" id="UP000000589"/>
    </source>
</evidence>
<evidence type="ECO:0007744" key="10">
    <source>
    </source>
</evidence>
<accession>Q5SZT7</accession>
<accession>Q3TV39</accession>
<accession>Q4KKZ9</accession>
<accession>Q5EBJ1</accession>
<accession>Q6P8T3</accession>
<accession>Q9CUJ2</accession>
<accession>Q9D5Y8</accession>
<organism evidence="9">
    <name type="scientific">Mus musculus</name>
    <name type="common">Mouse</name>
    <dbReference type="NCBI Taxonomy" id="10090"/>
    <lineage>
        <taxon>Eukaryota</taxon>
        <taxon>Metazoa</taxon>
        <taxon>Chordata</taxon>
        <taxon>Craniata</taxon>
        <taxon>Vertebrata</taxon>
        <taxon>Euteleostomi</taxon>
        <taxon>Mammalia</taxon>
        <taxon>Eutheria</taxon>
        <taxon>Euarchontoglires</taxon>
        <taxon>Glires</taxon>
        <taxon>Rodentia</taxon>
        <taxon>Myomorpha</taxon>
        <taxon>Muroidea</taxon>
        <taxon>Muridae</taxon>
        <taxon>Murinae</taxon>
        <taxon>Mus</taxon>
        <taxon>Mus</taxon>
    </lineage>
</organism>
<reference evidence="6" key="1">
    <citation type="journal article" date="2005" name="Science">
        <title>The transcriptional landscape of the mammalian genome.</title>
        <authorList>
            <person name="Carninci P."/>
            <person name="Kasukawa T."/>
            <person name="Katayama S."/>
            <person name="Gough J."/>
            <person name="Frith M.C."/>
            <person name="Maeda N."/>
            <person name="Oyama R."/>
            <person name="Ravasi T."/>
            <person name="Lenhard B."/>
            <person name="Wells C."/>
            <person name="Kodzius R."/>
            <person name="Shimokawa K."/>
            <person name="Bajic V.B."/>
            <person name="Brenner S.E."/>
            <person name="Batalov S."/>
            <person name="Forrest A.R."/>
            <person name="Zavolan M."/>
            <person name="Davis M.J."/>
            <person name="Wilming L.G."/>
            <person name="Aidinis V."/>
            <person name="Allen J.E."/>
            <person name="Ambesi-Impiombato A."/>
            <person name="Apweiler R."/>
            <person name="Aturaliya R.N."/>
            <person name="Bailey T.L."/>
            <person name="Bansal M."/>
            <person name="Baxter L."/>
            <person name="Beisel K.W."/>
            <person name="Bersano T."/>
            <person name="Bono H."/>
            <person name="Chalk A.M."/>
            <person name="Chiu K.P."/>
            <person name="Choudhary V."/>
            <person name="Christoffels A."/>
            <person name="Clutterbuck D.R."/>
            <person name="Crowe M.L."/>
            <person name="Dalla E."/>
            <person name="Dalrymple B.P."/>
            <person name="de Bono B."/>
            <person name="Della Gatta G."/>
            <person name="di Bernardo D."/>
            <person name="Down T."/>
            <person name="Engstrom P."/>
            <person name="Fagiolini M."/>
            <person name="Faulkner G."/>
            <person name="Fletcher C.F."/>
            <person name="Fukushima T."/>
            <person name="Furuno M."/>
            <person name="Futaki S."/>
            <person name="Gariboldi M."/>
            <person name="Georgii-Hemming P."/>
            <person name="Gingeras T.R."/>
            <person name="Gojobori T."/>
            <person name="Green R.E."/>
            <person name="Gustincich S."/>
            <person name="Harbers M."/>
            <person name="Hayashi Y."/>
            <person name="Hensch T.K."/>
            <person name="Hirokawa N."/>
            <person name="Hill D."/>
            <person name="Huminiecki L."/>
            <person name="Iacono M."/>
            <person name="Ikeo K."/>
            <person name="Iwama A."/>
            <person name="Ishikawa T."/>
            <person name="Jakt M."/>
            <person name="Kanapin A."/>
            <person name="Katoh M."/>
            <person name="Kawasawa Y."/>
            <person name="Kelso J."/>
            <person name="Kitamura H."/>
            <person name="Kitano H."/>
            <person name="Kollias G."/>
            <person name="Krishnan S.P."/>
            <person name="Kruger A."/>
            <person name="Kummerfeld S.K."/>
            <person name="Kurochkin I.V."/>
            <person name="Lareau L.F."/>
            <person name="Lazarevic D."/>
            <person name="Lipovich L."/>
            <person name="Liu J."/>
            <person name="Liuni S."/>
            <person name="McWilliam S."/>
            <person name="Madan Babu M."/>
            <person name="Madera M."/>
            <person name="Marchionni L."/>
            <person name="Matsuda H."/>
            <person name="Matsuzawa S."/>
            <person name="Miki H."/>
            <person name="Mignone F."/>
            <person name="Miyake S."/>
            <person name="Morris K."/>
            <person name="Mottagui-Tabar S."/>
            <person name="Mulder N."/>
            <person name="Nakano N."/>
            <person name="Nakauchi H."/>
            <person name="Ng P."/>
            <person name="Nilsson R."/>
            <person name="Nishiguchi S."/>
            <person name="Nishikawa S."/>
            <person name="Nori F."/>
            <person name="Ohara O."/>
            <person name="Okazaki Y."/>
            <person name="Orlando V."/>
            <person name="Pang K.C."/>
            <person name="Pavan W.J."/>
            <person name="Pavesi G."/>
            <person name="Pesole G."/>
            <person name="Petrovsky N."/>
            <person name="Piazza S."/>
            <person name="Reed J."/>
            <person name="Reid J.F."/>
            <person name="Ring B.Z."/>
            <person name="Ringwald M."/>
            <person name="Rost B."/>
            <person name="Ruan Y."/>
            <person name="Salzberg S.L."/>
            <person name="Sandelin A."/>
            <person name="Schneider C."/>
            <person name="Schoenbach C."/>
            <person name="Sekiguchi K."/>
            <person name="Semple C.A."/>
            <person name="Seno S."/>
            <person name="Sessa L."/>
            <person name="Sheng Y."/>
            <person name="Shibata Y."/>
            <person name="Shimada H."/>
            <person name="Shimada K."/>
            <person name="Silva D."/>
            <person name="Sinclair B."/>
            <person name="Sperling S."/>
            <person name="Stupka E."/>
            <person name="Sugiura K."/>
            <person name="Sultana R."/>
            <person name="Takenaka Y."/>
            <person name="Taki K."/>
            <person name="Tammoja K."/>
            <person name="Tan S.L."/>
            <person name="Tang S."/>
            <person name="Taylor M.S."/>
            <person name="Tegner J."/>
            <person name="Teichmann S.A."/>
            <person name="Ueda H.R."/>
            <person name="van Nimwegen E."/>
            <person name="Verardo R."/>
            <person name="Wei C.L."/>
            <person name="Yagi K."/>
            <person name="Yamanishi H."/>
            <person name="Zabarovsky E."/>
            <person name="Zhu S."/>
            <person name="Zimmer A."/>
            <person name="Hide W."/>
            <person name="Bult C."/>
            <person name="Grimmond S.M."/>
            <person name="Teasdale R.D."/>
            <person name="Liu E.T."/>
            <person name="Brusic V."/>
            <person name="Quackenbush J."/>
            <person name="Wahlestedt C."/>
            <person name="Mattick J.S."/>
            <person name="Hume D.A."/>
            <person name="Kai C."/>
            <person name="Sasaki D."/>
            <person name="Tomaru Y."/>
            <person name="Fukuda S."/>
            <person name="Kanamori-Katayama M."/>
            <person name="Suzuki M."/>
            <person name="Aoki J."/>
            <person name="Arakawa T."/>
            <person name="Iida J."/>
            <person name="Imamura K."/>
            <person name="Itoh M."/>
            <person name="Kato T."/>
            <person name="Kawaji H."/>
            <person name="Kawagashira N."/>
            <person name="Kawashima T."/>
            <person name="Kojima M."/>
            <person name="Kondo S."/>
            <person name="Konno H."/>
            <person name="Nakano K."/>
            <person name="Ninomiya N."/>
            <person name="Nishio T."/>
            <person name="Okada M."/>
            <person name="Plessy C."/>
            <person name="Shibata K."/>
            <person name="Shiraki T."/>
            <person name="Suzuki S."/>
            <person name="Tagami M."/>
            <person name="Waki K."/>
            <person name="Watahiki A."/>
            <person name="Okamura-Oho Y."/>
            <person name="Suzuki H."/>
            <person name="Kawai J."/>
            <person name="Hayashizaki Y."/>
        </authorList>
    </citation>
    <scope>NUCLEOTIDE SEQUENCE [LARGE SCALE MRNA]</scope>
    <source>
        <strain evidence="6">C57BL/6J</strain>
        <tissue evidence="6">Testis</tissue>
    </source>
</reference>
<reference evidence="9" key="2">
    <citation type="journal article" date="2009" name="PLoS Biol.">
        <title>Lineage-specific biology revealed by a finished genome assembly of the mouse.</title>
        <authorList>
            <person name="Church D.M."/>
            <person name="Goodstadt L."/>
            <person name="Hillier L.W."/>
            <person name="Zody M.C."/>
            <person name="Goldstein S."/>
            <person name="She X."/>
            <person name="Bult C.J."/>
            <person name="Agarwala R."/>
            <person name="Cherry J.L."/>
            <person name="DiCuccio M."/>
            <person name="Hlavina W."/>
            <person name="Kapustin Y."/>
            <person name="Meric P."/>
            <person name="Maglott D."/>
            <person name="Birtle Z."/>
            <person name="Marques A.C."/>
            <person name="Graves T."/>
            <person name="Zhou S."/>
            <person name="Teague B."/>
            <person name="Potamousis K."/>
            <person name="Churas C."/>
            <person name="Place M."/>
            <person name="Herschleb J."/>
            <person name="Runnheim R."/>
            <person name="Forrest D."/>
            <person name="Amos-Landgraf J."/>
            <person name="Schwartz D.C."/>
            <person name="Cheng Z."/>
            <person name="Lindblad-Toh K."/>
            <person name="Eichler E.E."/>
            <person name="Ponting C.P."/>
        </authorList>
    </citation>
    <scope>NUCLEOTIDE SEQUENCE [LARGE SCALE GENOMIC DNA]</scope>
    <source>
        <strain evidence="9">C57BL/6J</strain>
    </source>
</reference>
<reference evidence="7" key="3">
    <citation type="submission" date="2001-03" db="EMBL/GenBank/DDBJ databases">
        <authorList>
            <person name="Mural R.J."/>
            <person name="Adams M.D."/>
            <person name="Myers E.W."/>
            <person name="Smith H.O."/>
            <person name="Venter J.C."/>
        </authorList>
    </citation>
    <scope>NUCLEOTIDE SEQUENCE [LARGE SCALE GENOMIC DNA]</scope>
</reference>
<reference evidence="5" key="4">
    <citation type="journal article" date="2004" name="Genome Res.">
        <title>The status, quality, and expansion of the NIH full-length cDNA project: the Mammalian Gene Collection (MGC).</title>
        <authorList>
            <consortium name="The MGC Project Team"/>
        </authorList>
    </citation>
    <scope>NUCLEOTIDE SEQUENCE [LARGE SCALE MRNA]</scope>
    <source>
        <tissue evidence="5">Testis</tissue>
    </source>
</reference>
<reference key="5">
    <citation type="journal article" date="2010" name="Cell">
        <title>A tissue-specific atlas of mouse protein phosphorylation and expression.</title>
        <authorList>
            <person name="Huttlin E.L."/>
            <person name="Jedrychowski M.P."/>
            <person name="Elias J.E."/>
            <person name="Goswami T."/>
            <person name="Rad R."/>
            <person name="Beausoleil S.A."/>
            <person name="Villen J."/>
            <person name="Haas W."/>
            <person name="Sowa M.E."/>
            <person name="Gygi S.P."/>
        </authorList>
    </citation>
    <scope>PHOSPHORYLATION [LARGE SCALE ANALYSIS] AT SER-23; SER-25 AND SER-149</scope>
    <scope>IDENTIFICATION BY MASS SPECTROMETRY [LARGE SCALE ANALYSIS]</scope>
    <source>
        <tissue>Testis</tissue>
    </source>
</reference>
<reference evidence="4" key="6">
    <citation type="journal article" date="2015" name="PLoS ONE">
        <title>A novel transcriptional factor Nkapl is a germ cell-specific suppressor of Notch signaling and is indispensable for spermatogenesis.</title>
        <authorList>
            <person name="Okuda H."/>
            <person name="Kiuchi H."/>
            <person name="Takao T."/>
            <person name="Miyagawa Y."/>
            <person name="Tsujimura A."/>
            <person name="Nonomura N."/>
            <person name="Miyata H."/>
            <person name="Okabe M."/>
            <person name="Ikawa M."/>
            <person name="Kawakami Y."/>
            <person name="Goshima N."/>
            <person name="Wada M."/>
            <person name="Tanaka H."/>
        </authorList>
    </citation>
    <scope>FUNCTION</scope>
    <scope>INTERACTION WITH CIR1; HDAC3 AND RBPJ</scope>
    <scope>SUBCELLULAR LOCATION</scope>
    <scope>TISSUE SPECIFICITY</scope>
    <scope>DEVELOPMENTAL STAGE</scope>
    <scope>DISRUPTION PHENOTYPE</scope>
</reference>
<protein>
    <recommendedName>
        <fullName evidence="1">NKAP-like protein</fullName>
    </recommendedName>
</protein>
<gene>
    <name evidence="8" type="primary">Nkapl</name>
</gene>
<name>NKAPL_MOUSE</name>
<dbReference type="EMBL" id="AK014812">
    <property type="protein sequence ID" value="BAB29564.1"/>
    <property type="molecule type" value="mRNA"/>
</dbReference>
<dbReference type="EMBL" id="AK015912">
    <property type="protein sequence ID" value="BAB30027.1"/>
    <property type="molecule type" value="mRNA"/>
</dbReference>
<dbReference type="EMBL" id="AK160424">
    <property type="protein sequence ID" value="BAE35781.1"/>
    <property type="molecule type" value="mRNA"/>
</dbReference>
<dbReference type="EMBL" id="CH466561">
    <property type="protein sequence ID" value="EDL32651.1"/>
    <property type="molecule type" value="Genomic_DNA"/>
</dbReference>
<dbReference type="EMBL" id="AL589742">
    <property type="status" value="NOT_ANNOTATED_CDS"/>
    <property type="molecule type" value="Genomic_DNA"/>
</dbReference>
<dbReference type="EMBL" id="BC061080">
    <property type="protein sequence ID" value="AAH61080.1"/>
    <property type="status" value="ALT_SEQ"/>
    <property type="molecule type" value="mRNA"/>
</dbReference>
<dbReference type="EMBL" id="BC089537">
    <property type="protein sequence ID" value="AAH89537.1"/>
    <property type="molecule type" value="mRNA"/>
</dbReference>
<dbReference type="EMBL" id="BC099550">
    <property type="protein sequence ID" value="AAH99550.1"/>
    <property type="molecule type" value="mRNA"/>
</dbReference>
<dbReference type="CCDS" id="CCDS26276.1"/>
<dbReference type="RefSeq" id="NP_079995.2">
    <property type="nucleotide sequence ID" value="NM_025719.3"/>
</dbReference>
<dbReference type="SMR" id="Q5SZT7"/>
<dbReference type="FunCoup" id="Q5SZT7">
    <property type="interactions" value="876"/>
</dbReference>
<dbReference type="STRING" id="10090.ENSMUSP00000065168"/>
<dbReference type="iPTMnet" id="Q5SZT7"/>
<dbReference type="PhosphoSitePlus" id="Q5SZT7"/>
<dbReference type="jPOST" id="Q5SZT7"/>
<dbReference type="PaxDb" id="10090-ENSMUSP00000065168"/>
<dbReference type="ProteomicsDB" id="293665"/>
<dbReference type="Pumba" id="Q5SZT7"/>
<dbReference type="Antibodypedia" id="44746">
    <property type="antibodies" value="76 antibodies from 14 providers"/>
</dbReference>
<dbReference type="DNASU" id="66707"/>
<dbReference type="Ensembl" id="ENSMUST00000068235.6">
    <property type="protein sequence ID" value="ENSMUSP00000065168.5"/>
    <property type="gene ID" value="ENSMUSG00000059395.5"/>
</dbReference>
<dbReference type="GeneID" id="66707"/>
<dbReference type="KEGG" id="mmu:66707"/>
<dbReference type="UCSC" id="uc007pqm.2">
    <property type="organism name" value="mouse"/>
</dbReference>
<dbReference type="AGR" id="MGI:1913957"/>
<dbReference type="CTD" id="222698"/>
<dbReference type="MGI" id="MGI:1913957">
    <property type="gene designation" value="Nkapl"/>
</dbReference>
<dbReference type="VEuPathDB" id="HostDB:ENSMUSG00000059395"/>
<dbReference type="eggNOG" id="KOG2812">
    <property type="taxonomic scope" value="Eukaryota"/>
</dbReference>
<dbReference type="GeneTree" id="ENSGT00940000163102"/>
<dbReference type="HOGENOM" id="CLU_032439_1_0_1"/>
<dbReference type="InParanoid" id="Q5SZT7"/>
<dbReference type="OMA" id="WRQQENM"/>
<dbReference type="OrthoDB" id="91432at9989"/>
<dbReference type="PhylomeDB" id="Q5SZT7"/>
<dbReference type="TreeFam" id="TF315333"/>
<dbReference type="BioGRID-ORCS" id="66707">
    <property type="hits" value="1 hit in 78 CRISPR screens"/>
</dbReference>
<dbReference type="PRO" id="PR:Q5SZT7"/>
<dbReference type="Proteomes" id="UP000000589">
    <property type="component" value="Chromosome 13"/>
</dbReference>
<dbReference type="RNAct" id="Q5SZT7">
    <property type="molecule type" value="protein"/>
</dbReference>
<dbReference type="Bgee" id="ENSMUSG00000059395">
    <property type="expression patterns" value="Expressed in spermatocyte and 66 other cell types or tissues"/>
</dbReference>
<dbReference type="GO" id="GO:0005634">
    <property type="term" value="C:nucleus"/>
    <property type="evidence" value="ECO:0007669"/>
    <property type="project" value="UniProtKB-SubCell"/>
</dbReference>
<dbReference type="GO" id="GO:0003682">
    <property type="term" value="F:chromatin binding"/>
    <property type="evidence" value="ECO:0007669"/>
    <property type="project" value="InterPro"/>
</dbReference>
<dbReference type="GO" id="GO:0030154">
    <property type="term" value="P:cell differentiation"/>
    <property type="evidence" value="ECO:0007669"/>
    <property type="project" value="UniProtKB-KW"/>
</dbReference>
<dbReference type="GO" id="GO:0007283">
    <property type="term" value="P:spermatogenesis"/>
    <property type="evidence" value="ECO:0007669"/>
    <property type="project" value="UniProtKB-KW"/>
</dbReference>
<dbReference type="InterPro" id="IPR040466">
    <property type="entry name" value="NKAP"/>
</dbReference>
<dbReference type="InterPro" id="IPR009269">
    <property type="entry name" value="NKAP_C"/>
</dbReference>
<dbReference type="PANTHER" id="PTHR13087">
    <property type="entry name" value="NF-KAPPA B ACTIVATING PROTEIN"/>
    <property type="match status" value="1"/>
</dbReference>
<dbReference type="PANTHER" id="PTHR13087:SF3">
    <property type="entry name" value="NKAP-LIKE PROTEIN"/>
    <property type="match status" value="1"/>
</dbReference>
<dbReference type="Pfam" id="PF15692">
    <property type="entry name" value="NKAP"/>
    <property type="match status" value="1"/>
</dbReference>
<dbReference type="Pfam" id="PF06047">
    <property type="entry name" value="Nkap_C"/>
    <property type="match status" value="1"/>
</dbReference>